<gene>
    <name evidence="1" type="primary">mnmA</name>
    <name type="synonym">trmU</name>
    <name type="ordered locus">BruAb1_1578</name>
</gene>
<comment type="function">
    <text evidence="1">Catalyzes the 2-thiolation of uridine at the wobble position (U34) of tRNA, leading to the formation of s(2)U34.</text>
</comment>
<comment type="catalytic activity">
    <reaction evidence="1">
        <text>S-sulfanyl-L-cysteinyl-[protein] + uridine(34) in tRNA + AH2 + ATP = 2-thiouridine(34) in tRNA + L-cysteinyl-[protein] + A + AMP + diphosphate + H(+)</text>
        <dbReference type="Rhea" id="RHEA:47032"/>
        <dbReference type="Rhea" id="RHEA-COMP:10131"/>
        <dbReference type="Rhea" id="RHEA-COMP:11726"/>
        <dbReference type="Rhea" id="RHEA-COMP:11727"/>
        <dbReference type="Rhea" id="RHEA-COMP:11728"/>
        <dbReference type="ChEBI" id="CHEBI:13193"/>
        <dbReference type="ChEBI" id="CHEBI:15378"/>
        <dbReference type="ChEBI" id="CHEBI:17499"/>
        <dbReference type="ChEBI" id="CHEBI:29950"/>
        <dbReference type="ChEBI" id="CHEBI:30616"/>
        <dbReference type="ChEBI" id="CHEBI:33019"/>
        <dbReference type="ChEBI" id="CHEBI:61963"/>
        <dbReference type="ChEBI" id="CHEBI:65315"/>
        <dbReference type="ChEBI" id="CHEBI:87170"/>
        <dbReference type="ChEBI" id="CHEBI:456215"/>
        <dbReference type="EC" id="2.8.1.13"/>
    </reaction>
</comment>
<comment type="subcellular location">
    <subcellularLocation>
        <location evidence="1">Cytoplasm</location>
    </subcellularLocation>
</comment>
<comment type="similarity">
    <text evidence="1">Belongs to the MnmA/TRMU family.</text>
</comment>
<proteinExistence type="inferred from homology"/>
<evidence type="ECO:0000255" key="1">
    <source>
        <dbReference type="HAMAP-Rule" id="MF_00144"/>
    </source>
</evidence>
<feature type="chain" id="PRO_0000121612" description="tRNA-specific 2-thiouridylase MnmA">
    <location>
        <begin position="1"/>
        <end position="398"/>
    </location>
</feature>
<feature type="region of interest" description="Interaction with tRNA" evidence="1">
    <location>
        <begin position="160"/>
        <end position="162"/>
    </location>
</feature>
<feature type="active site" description="Nucleophile" evidence="1">
    <location>
        <position position="114"/>
    </location>
</feature>
<feature type="active site" description="Cysteine persulfide intermediate" evidence="1">
    <location>
        <position position="210"/>
    </location>
</feature>
<feature type="binding site" evidence="1">
    <location>
        <begin position="20"/>
        <end position="27"/>
    </location>
    <ligand>
        <name>ATP</name>
        <dbReference type="ChEBI" id="CHEBI:30616"/>
    </ligand>
</feature>
<feature type="binding site" evidence="1">
    <location>
        <position position="46"/>
    </location>
    <ligand>
        <name>ATP</name>
        <dbReference type="ChEBI" id="CHEBI:30616"/>
    </ligand>
</feature>
<feature type="binding site" evidence="1">
    <location>
        <position position="138"/>
    </location>
    <ligand>
        <name>ATP</name>
        <dbReference type="ChEBI" id="CHEBI:30616"/>
    </ligand>
</feature>
<feature type="site" description="Interaction with tRNA" evidence="1">
    <location>
        <position position="139"/>
    </location>
</feature>
<feature type="site" description="Interaction with tRNA" evidence="1">
    <location>
        <position position="352"/>
    </location>
</feature>
<feature type="disulfide bond" description="Alternate" evidence="1">
    <location>
        <begin position="114"/>
        <end position="210"/>
    </location>
</feature>
<keyword id="KW-0067">ATP-binding</keyword>
<keyword id="KW-0963">Cytoplasm</keyword>
<keyword id="KW-1015">Disulfide bond</keyword>
<keyword id="KW-0547">Nucleotide-binding</keyword>
<keyword id="KW-0694">RNA-binding</keyword>
<keyword id="KW-0808">Transferase</keyword>
<keyword id="KW-0819">tRNA processing</keyword>
<keyword id="KW-0820">tRNA-binding</keyword>
<reference key="1">
    <citation type="journal article" date="2005" name="J. Bacteriol.">
        <title>Completion of the genome sequence of Brucella abortus and comparison to the highly similar genomes of Brucella melitensis and Brucella suis.</title>
        <authorList>
            <person name="Halling S.M."/>
            <person name="Peterson-Burch B.D."/>
            <person name="Bricker B.J."/>
            <person name="Zuerner R.L."/>
            <person name="Qing Z."/>
            <person name="Li L.-L."/>
            <person name="Kapur V."/>
            <person name="Alt D.P."/>
            <person name="Olsen S.C."/>
        </authorList>
    </citation>
    <scope>NUCLEOTIDE SEQUENCE [LARGE SCALE GENOMIC DNA]</scope>
    <source>
        <strain>9-941</strain>
    </source>
</reference>
<name>MNMA_BRUAB</name>
<dbReference type="EC" id="2.8.1.13" evidence="1"/>
<dbReference type="EMBL" id="AE017223">
    <property type="protein sequence ID" value="AAX74903.1"/>
    <property type="molecule type" value="Genomic_DNA"/>
</dbReference>
<dbReference type="SMR" id="Q57BT1"/>
<dbReference type="EnsemblBacteria" id="AAX74903">
    <property type="protein sequence ID" value="AAX74903"/>
    <property type="gene ID" value="BruAb1_1578"/>
</dbReference>
<dbReference type="KEGG" id="bmb:BruAb1_1578"/>
<dbReference type="HOGENOM" id="CLU_035188_0_1_5"/>
<dbReference type="Proteomes" id="UP000000540">
    <property type="component" value="Chromosome I"/>
</dbReference>
<dbReference type="GO" id="GO:0005737">
    <property type="term" value="C:cytoplasm"/>
    <property type="evidence" value="ECO:0007669"/>
    <property type="project" value="UniProtKB-SubCell"/>
</dbReference>
<dbReference type="GO" id="GO:0005524">
    <property type="term" value="F:ATP binding"/>
    <property type="evidence" value="ECO:0007669"/>
    <property type="project" value="UniProtKB-KW"/>
</dbReference>
<dbReference type="GO" id="GO:0000049">
    <property type="term" value="F:tRNA binding"/>
    <property type="evidence" value="ECO:0007669"/>
    <property type="project" value="UniProtKB-KW"/>
</dbReference>
<dbReference type="GO" id="GO:0103016">
    <property type="term" value="F:tRNA-uridine 2-sulfurtransferase activity"/>
    <property type="evidence" value="ECO:0007669"/>
    <property type="project" value="UniProtKB-EC"/>
</dbReference>
<dbReference type="GO" id="GO:0002143">
    <property type="term" value="P:tRNA wobble position uridine thiolation"/>
    <property type="evidence" value="ECO:0007669"/>
    <property type="project" value="TreeGrafter"/>
</dbReference>
<dbReference type="CDD" id="cd01998">
    <property type="entry name" value="MnmA_TRMU-like"/>
    <property type="match status" value="1"/>
</dbReference>
<dbReference type="FunFam" id="2.30.30.280:FF:000001">
    <property type="entry name" value="tRNA-specific 2-thiouridylase MnmA"/>
    <property type="match status" value="1"/>
</dbReference>
<dbReference type="FunFam" id="3.40.50.620:FF:000115">
    <property type="entry name" value="tRNA-specific 2-thiouridylase MnmA"/>
    <property type="match status" value="1"/>
</dbReference>
<dbReference type="Gene3D" id="2.30.30.280">
    <property type="entry name" value="Adenine nucleotide alpha hydrolases-like domains"/>
    <property type="match status" value="1"/>
</dbReference>
<dbReference type="Gene3D" id="3.40.50.620">
    <property type="entry name" value="HUPs"/>
    <property type="match status" value="1"/>
</dbReference>
<dbReference type="Gene3D" id="2.40.30.10">
    <property type="entry name" value="Translation factors"/>
    <property type="match status" value="1"/>
</dbReference>
<dbReference type="HAMAP" id="MF_00144">
    <property type="entry name" value="tRNA_thiouridyl_MnmA"/>
    <property type="match status" value="1"/>
</dbReference>
<dbReference type="InterPro" id="IPR004506">
    <property type="entry name" value="MnmA-like"/>
</dbReference>
<dbReference type="InterPro" id="IPR046885">
    <property type="entry name" value="MnmA-like_C"/>
</dbReference>
<dbReference type="InterPro" id="IPR046884">
    <property type="entry name" value="MnmA-like_central"/>
</dbReference>
<dbReference type="InterPro" id="IPR023382">
    <property type="entry name" value="MnmA-like_central_sf"/>
</dbReference>
<dbReference type="InterPro" id="IPR014729">
    <property type="entry name" value="Rossmann-like_a/b/a_fold"/>
</dbReference>
<dbReference type="NCBIfam" id="NF001138">
    <property type="entry name" value="PRK00143.1"/>
    <property type="match status" value="1"/>
</dbReference>
<dbReference type="NCBIfam" id="TIGR00420">
    <property type="entry name" value="trmU"/>
    <property type="match status" value="1"/>
</dbReference>
<dbReference type="PANTHER" id="PTHR11933:SF5">
    <property type="entry name" value="MITOCHONDRIAL TRNA-SPECIFIC 2-THIOURIDYLASE 1"/>
    <property type="match status" value="1"/>
</dbReference>
<dbReference type="PANTHER" id="PTHR11933">
    <property type="entry name" value="TRNA 5-METHYLAMINOMETHYL-2-THIOURIDYLATE -METHYLTRANSFERASE"/>
    <property type="match status" value="1"/>
</dbReference>
<dbReference type="Pfam" id="PF03054">
    <property type="entry name" value="tRNA_Me_trans"/>
    <property type="match status" value="1"/>
</dbReference>
<dbReference type="Pfam" id="PF20258">
    <property type="entry name" value="tRNA_Me_trans_C"/>
    <property type="match status" value="1"/>
</dbReference>
<dbReference type="Pfam" id="PF20259">
    <property type="entry name" value="tRNA_Me_trans_M"/>
    <property type="match status" value="1"/>
</dbReference>
<dbReference type="SUPFAM" id="SSF52402">
    <property type="entry name" value="Adenine nucleotide alpha hydrolases-like"/>
    <property type="match status" value="1"/>
</dbReference>
<sequence length="398" mass="43229">MSLNSLDLPGKPEDTRVVVAMSGGVDSSVVAGILKREGYDVVGVTLQLYDHGAAVHRAGSCCAGQDIEDARRVSESLGIPHYVLDYEARFREAVIDPFANSYVSGETPIPCVSCNQTVKFADLLQTARDLGADALATGHYIRSRANGAHRALYRPVDTDRDQSYFLFATTQEQIDYLRFPLGHLPKAQVREIAEELGLTVAKKQDSQDICFVPQGKYSDIISRLKPEAANPGDIVHIDGRTLGRHDGIVHYTVGQRRGIGVATGEALYVVHLDAANARVIVGPREALETHKVFLRDVNWLGDTPIADLPKSGMEVFAKVRSTRPPRPAVLRHADGQTWVELVDGESGIAPGQACVLYSDDSNAARVFGGGFIGRSEREPQAEEMLRRLMANADKASAA</sequence>
<protein>
    <recommendedName>
        <fullName evidence="1">tRNA-specific 2-thiouridylase MnmA</fullName>
        <ecNumber evidence="1">2.8.1.13</ecNumber>
    </recommendedName>
</protein>
<accession>Q57BT1</accession>
<organism>
    <name type="scientific">Brucella abortus biovar 1 (strain 9-941)</name>
    <dbReference type="NCBI Taxonomy" id="262698"/>
    <lineage>
        <taxon>Bacteria</taxon>
        <taxon>Pseudomonadati</taxon>
        <taxon>Pseudomonadota</taxon>
        <taxon>Alphaproteobacteria</taxon>
        <taxon>Hyphomicrobiales</taxon>
        <taxon>Brucellaceae</taxon>
        <taxon>Brucella/Ochrobactrum group</taxon>
        <taxon>Brucella</taxon>
    </lineage>
</organism>